<accession>A5GWN5</accession>
<keyword id="KW-0450">Lipoyl</keyword>
<keyword id="KW-1185">Reference proteome</keyword>
<protein>
    <recommendedName>
        <fullName evidence="1">Glycine cleavage system H protein</fullName>
    </recommendedName>
</protein>
<feature type="chain" id="PRO_1000022205" description="Glycine cleavage system H protein">
    <location>
        <begin position="1"/>
        <end position="130"/>
    </location>
</feature>
<feature type="domain" description="Lipoyl-binding" evidence="2">
    <location>
        <begin position="24"/>
        <end position="106"/>
    </location>
</feature>
<feature type="modified residue" description="N6-lipoyllysine" evidence="1">
    <location>
        <position position="65"/>
    </location>
</feature>
<dbReference type="EMBL" id="CT978603">
    <property type="protein sequence ID" value="CAK29294.1"/>
    <property type="molecule type" value="Genomic_DNA"/>
</dbReference>
<dbReference type="SMR" id="A5GWN5"/>
<dbReference type="STRING" id="316278.SynRCC307_2391"/>
<dbReference type="KEGG" id="syr:SynRCC307_2391"/>
<dbReference type="eggNOG" id="COG0509">
    <property type="taxonomic scope" value="Bacteria"/>
</dbReference>
<dbReference type="HOGENOM" id="CLU_097408_2_2_3"/>
<dbReference type="OrthoDB" id="9796712at2"/>
<dbReference type="Proteomes" id="UP000001115">
    <property type="component" value="Chromosome"/>
</dbReference>
<dbReference type="GO" id="GO:0005829">
    <property type="term" value="C:cytosol"/>
    <property type="evidence" value="ECO:0007669"/>
    <property type="project" value="TreeGrafter"/>
</dbReference>
<dbReference type="GO" id="GO:0005960">
    <property type="term" value="C:glycine cleavage complex"/>
    <property type="evidence" value="ECO:0007669"/>
    <property type="project" value="InterPro"/>
</dbReference>
<dbReference type="GO" id="GO:0019464">
    <property type="term" value="P:glycine decarboxylation via glycine cleavage system"/>
    <property type="evidence" value="ECO:0007669"/>
    <property type="project" value="UniProtKB-UniRule"/>
</dbReference>
<dbReference type="CDD" id="cd06848">
    <property type="entry name" value="GCS_H"/>
    <property type="match status" value="1"/>
</dbReference>
<dbReference type="Gene3D" id="2.40.50.100">
    <property type="match status" value="1"/>
</dbReference>
<dbReference type="HAMAP" id="MF_00272">
    <property type="entry name" value="GcvH"/>
    <property type="match status" value="1"/>
</dbReference>
<dbReference type="InterPro" id="IPR003016">
    <property type="entry name" value="2-oxoA_DH_lipoyl-BS"/>
</dbReference>
<dbReference type="InterPro" id="IPR000089">
    <property type="entry name" value="Biotin_lipoyl"/>
</dbReference>
<dbReference type="InterPro" id="IPR002930">
    <property type="entry name" value="GCV_H"/>
</dbReference>
<dbReference type="InterPro" id="IPR033753">
    <property type="entry name" value="GCV_H/Fam206"/>
</dbReference>
<dbReference type="InterPro" id="IPR017453">
    <property type="entry name" value="GCV_H_sub"/>
</dbReference>
<dbReference type="InterPro" id="IPR011053">
    <property type="entry name" value="Single_hybrid_motif"/>
</dbReference>
<dbReference type="NCBIfam" id="TIGR00527">
    <property type="entry name" value="gcvH"/>
    <property type="match status" value="1"/>
</dbReference>
<dbReference type="NCBIfam" id="NF002270">
    <property type="entry name" value="PRK01202.1"/>
    <property type="match status" value="1"/>
</dbReference>
<dbReference type="PANTHER" id="PTHR11715">
    <property type="entry name" value="GLYCINE CLEAVAGE SYSTEM H PROTEIN"/>
    <property type="match status" value="1"/>
</dbReference>
<dbReference type="PANTHER" id="PTHR11715:SF3">
    <property type="entry name" value="GLYCINE CLEAVAGE SYSTEM H PROTEIN-RELATED"/>
    <property type="match status" value="1"/>
</dbReference>
<dbReference type="Pfam" id="PF01597">
    <property type="entry name" value="GCV_H"/>
    <property type="match status" value="1"/>
</dbReference>
<dbReference type="SUPFAM" id="SSF51230">
    <property type="entry name" value="Single hybrid motif"/>
    <property type="match status" value="1"/>
</dbReference>
<dbReference type="PROSITE" id="PS50968">
    <property type="entry name" value="BIOTINYL_LIPOYL"/>
    <property type="match status" value="1"/>
</dbReference>
<dbReference type="PROSITE" id="PS00189">
    <property type="entry name" value="LIPOYL"/>
    <property type="match status" value="1"/>
</dbReference>
<proteinExistence type="inferred from homology"/>
<reference key="1">
    <citation type="submission" date="2006-05" db="EMBL/GenBank/DDBJ databases">
        <authorList>
            <consortium name="Genoscope"/>
        </authorList>
    </citation>
    <scope>NUCLEOTIDE SEQUENCE [LARGE SCALE GENOMIC DNA]</scope>
    <source>
        <strain>RCC307</strain>
    </source>
</reference>
<gene>
    <name evidence="1" type="primary">gcvH</name>
    <name type="ordered locus">SynRCC307_2391</name>
</gene>
<sequence length="130" mass="13772">MALTFPAELRYADSHEYAGPSDEGIKVGISAFAVDQLGDIVFVELPEVGASIEKGSSFGTVESVKAVEEMYAPVSGTVVAANQAVIDTPELLQNDPYQEGWLLKITPADPSQMEQLMDATSYSAKVEGGS</sequence>
<organism>
    <name type="scientific">Synechococcus sp. (strain RCC307)</name>
    <dbReference type="NCBI Taxonomy" id="316278"/>
    <lineage>
        <taxon>Bacteria</taxon>
        <taxon>Bacillati</taxon>
        <taxon>Cyanobacteriota</taxon>
        <taxon>Cyanophyceae</taxon>
        <taxon>Synechococcales</taxon>
        <taxon>Synechococcaceae</taxon>
        <taxon>Synechococcus</taxon>
    </lineage>
</organism>
<name>GCSH_SYNR3</name>
<evidence type="ECO:0000255" key="1">
    <source>
        <dbReference type="HAMAP-Rule" id="MF_00272"/>
    </source>
</evidence>
<evidence type="ECO:0000255" key="2">
    <source>
        <dbReference type="PROSITE-ProRule" id="PRU01066"/>
    </source>
</evidence>
<comment type="function">
    <text evidence="1">The glycine cleavage system catalyzes the degradation of glycine. The H protein shuttles the methylamine group of glycine from the P protein to the T protein.</text>
</comment>
<comment type="cofactor">
    <cofactor evidence="1">
        <name>(R)-lipoate</name>
        <dbReference type="ChEBI" id="CHEBI:83088"/>
    </cofactor>
    <text evidence="1">Binds 1 lipoyl cofactor covalently.</text>
</comment>
<comment type="subunit">
    <text evidence="1">The glycine cleavage system is composed of four proteins: P, T, L and H.</text>
</comment>
<comment type="similarity">
    <text evidence="1">Belongs to the GcvH family.</text>
</comment>